<dbReference type="EMBL" id="CP000903">
    <property type="protein sequence ID" value="ABY42212.1"/>
    <property type="molecule type" value="Genomic_DNA"/>
</dbReference>
<dbReference type="RefSeq" id="WP_002011118.1">
    <property type="nucleotide sequence ID" value="NC_010184.1"/>
</dbReference>
<dbReference type="SMR" id="A9VI69"/>
<dbReference type="KEGG" id="bwe:BcerKBAB4_0960"/>
<dbReference type="eggNOG" id="COG1846">
    <property type="taxonomic scope" value="Bacteria"/>
</dbReference>
<dbReference type="HOGENOM" id="CLU_115790_0_0_9"/>
<dbReference type="Proteomes" id="UP000002154">
    <property type="component" value="Chromosome"/>
</dbReference>
<dbReference type="GO" id="GO:0003677">
    <property type="term" value="F:DNA binding"/>
    <property type="evidence" value="ECO:0007669"/>
    <property type="project" value="UniProtKB-UniRule"/>
</dbReference>
<dbReference type="GO" id="GO:0003700">
    <property type="term" value="F:DNA-binding transcription factor activity"/>
    <property type="evidence" value="ECO:0007669"/>
    <property type="project" value="UniProtKB-UniRule"/>
</dbReference>
<dbReference type="GO" id="GO:0045892">
    <property type="term" value="P:negative regulation of DNA-templated transcription"/>
    <property type="evidence" value="ECO:0007669"/>
    <property type="project" value="UniProtKB-UniRule"/>
</dbReference>
<dbReference type="GO" id="GO:0006950">
    <property type="term" value="P:response to stress"/>
    <property type="evidence" value="ECO:0007669"/>
    <property type="project" value="TreeGrafter"/>
</dbReference>
<dbReference type="GO" id="GO:0030435">
    <property type="term" value="P:sporulation resulting in formation of a cellular spore"/>
    <property type="evidence" value="ECO:0007669"/>
    <property type="project" value="UniProtKB-UniRule"/>
</dbReference>
<dbReference type="FunFam" id="1.10.10.10:FF:000194">
    <property type="entry name" value="HTH-type transcriptional regulator Hpr"/>
    <property type="match status" value="1"/>
</dbReference>
<dbReference type="Gene3D" id="1.10.10.10">
    <property type="entry name" value="Winged helix-like DNA-binding domain superfamily/Winged helix DNA-binding domain"/>
    <property type="match status" value="1"/>
</dbReference>
<dbReference type="HAMAP" id="MF_01911">
    <property type="entry name" value="HTH_type_Hpr"/>
    <property type="match status" value="1"/>
</dbReference>
<dbReference type="InterPro" id="IPR000835">
    <property type="entry name" value="HTH_MarR-typ"/>
</dbReference>
<dbReference type="InterPro" id="IPR023488">
    <property type="entry name" value="HTH_tscrpt_reg_Hpr"/>
</dbReference>
<dbReference type="InterPro" id="IPR039422">
    <property type="entry name" value="MarR/SlyA-like"/>
</dbReference>
<dbReference type="InterPro" id="IPR023187">
    <property type="entry name" value="Tscrpt_reg_MarR-type_CS"/>
</dbReference>
<dbReference type="InterPro" id="IPR036388">
    <property type="entry name" value="WH-like_DNA-bd_sf"/>
</dbReference>
<dbReference type="InterPro" id="IPR036390">
    <property type="entry name" value="WH_DNA-bd_sf"/>
</dbReference>
<dbReference type="NCBIfam" id="NF010349">
    <property type="entry name" value="PRK13777.1"/>
    <property type="match status" value="1"/>
</dbReference>
<dbReference type="PANTHER" id="PTHR33164:SF58">
    <property type="entry name" value="DNA-BINDING TRANSCRIPTIONAL REPRESSOR SCOC"/>
    <property type="match status" value="1"/>
</dbReference>
<dbReference type="PANTHER" id="PTHR33164">
    <property type="entry name" value="TRANSCRIPTIONAL REGULATOR, MARR FAMILY"/>
    <property type="match status" value="1"/>
</dbReference>
<dbReference type="Pfam" id="PF01047">
    <property type="entry name" value="MarR"/>
    <property type="match status" value="1"/>
</dbReference>
<dbReference type="SMART" id="SM00347">
    <property type="entry name" value="HTH_MARR"/>
    <property type="match status" value="1"/>
</dbReference>
<dbReference type="SUPFAM" id="SSF46785">
    <property type="entry name" value="Winged helix' DNA-binding domain"/>
    <property type="match status" value="1"/>
</dbReference>
<dbReference type="PROSITE" id="PS01117">
    <property type="entry name" value="HTH_MARR_1"/>
    <property type="match status" value="1"/>
</dbReference>
<dbReference type="PROSITE" id="PS50995">
    <property type="entry name" value="HTH_MARR_2"/>
    <property type="match status" value="1"/>
</dbReference>
<sequence length="185" mass="21786">MKSGEKNYSVKEAMIFSQRIAQLSKALWKCVEKDWQQWIKPYDLNINEHHILSIAYHLKGASISEIAKFGVMHVSTAFNFSKKLEERGYLVFSKKEDDKRNTYIEITDKGEELLLRLMEEYDPENNSVFNGALELRNFYGKFPENIELIAILRNIYGQDFIDIFEKSLENIEENFTETDQKLVKK</sequence>
<gene>
    <name evidence="1" type="primary">hpr</name>
    <name type="ordered locus">BcerKBAB4_0960</name>
</gene>
<evidence type="ECO:0000255" key="1">
    <source>
        <dbReference type="HAMAP-Rule" id="MF_01911"/>
    </source>
</evidence>
<reference key="1">
    <citation type="journal article" date="2008" name="Chem. Biol. Interact.">
        <title>Extending the Bacillus cereus group genomics to putative food-borne pathogens of different toxicity.</title>
        <authorList>
            <person name="Lapidus A."/>
            <person name="Goltsman E."/>
            <person name="Auger S."/>
            <person name="Galleron N."/>
            <person name="Segurens B."/>
            <person name="Dossat C."/>
            <person name="Land M.L."/>
            <person name="Broussolle V."/>
            <person name="Brillard J."/>
            <person name="Guinebretiere M.-H."/>
            <person name="Sanchis V."/>
            <person name="Nguen-the C."/>
            <person name="Lereclus D."/>
            <person name="Richardson P."/>
            <person name="Wincker P."/>
            <person name="Weissenbach J."/>
            <person name="Ehrlich S.D."/>
            <person name="Sorokin A."/>
        </authorList>
    </citation>
    <scope>NUCLEOTIDE SEQUENCE [LARGE SCALE GENOMIC DNA]</scope>
    <source>
        <strain>KBAB4</strain>
    </source>
</reference>
<accession>A9VI69</accession>
<keyword id="KW-0238">DNA-binding</keyword>
<keyword id="KW-0678">Repressor</keyword>
<keyword id="KW-0749">Sporulation</keyword>
<keyword id="KW-0804">Transcription</keyword>
<keyword id="KW-0805">Transcription regulation</keyword>
<proteinExistence type="inferred from homology"/>
<protein>
    <recommendedName>
        <fullName evidence="1">HTH-type transcriptional regulator Hpr</fullName>
    </recommendedName>
    <alternativeName>
        <fullName evidence="1">Protease production regulatory protein Hpr</fullName>
    </alternativeName>
</protein>
<name>HPR_BACMK</name>
<feature type="chain" id="PRO_0000343628" description="HTH-type transcriptional regulator Hpr">
    <location>
        <begin position="1"/>
        <end position="185"/>
    </location>
</feature>
<feature type="domain" description="HTH marR-type" evidence="1">
    <location>
        <begin position="13"/>
        <end position="157"/>
    </location>
</feature>
<feature type="DNA-binding region" description="H-T-H motif" evidence="1">
    <location>
        <begin position="63"/>
        <end position="86"/>
    </location>
</feature>
<organism>
    <name type="scientific">Bacillus mycoides (strain KBAB4)</name>
    <name type="common">Bacillus weihenstephanensis</name>
    <dbReference type="NCBI Taxonomy" id="315730"/>
    <lineage>
        <taxon>Bacteria</taxon>
        <taxon>Bacillati</taxon>
        <taxon>Bacillota</taxon>
        <taxon>Bacilli</taxon>
        <taxon>Bacillales</taxon>
        <taxon>Bacillaceae</taxon>
        <taxon>Bacillus</taxon>
        <taxon>Bacillus cereus group</taxon>
    </lineage>
</organism>
<comment type="function">
    <text evidence="1">Negative regulator of protease production and sporulation.</text>
</comment>
<comment type="subunit">
    <text evidence="1">Homodimer.</text>
</comment>